<keyword id="KW-0233">DNA recombination</keyword>
<keyword id="KW-0238">DNA-binding</keyword>
<keyword id="KW-1185">Reference proteome</keyword>
<keyword id="KW-0804">Transcription</keyword>
<keyword id="KW-0805">Transcription regulation</keyword>
<keyword id="KW-0810">Translation regulation</keyword>
<sequence>MIKSELVQRIAEHNPHLYQRDVENIVNAILDEIVAALARGDRVELRGFGAFSVKHRPARAGRNPRTGEHVPVDQKSVPFFKTGKEMRERLNRDNATSEANA</sequence>
<gene>
    <name evidence="1" type="primary">ihfB</name>
    <name evidence="1" type="synonym">himD</name>
    <name type="ordered locus">Nwi_0058</name>
</gene>
<proteinExistence type="inferred from homology"/>
<protein>
    <recommendedName>
        <fullName evidence="1">Integration host factor subunit beta</fullName>
        <shortName evidence="1">IHF-beta</shortName>
    </recommendedName>
</protein>
<organism>
    <name type="scientific">Nitrobacter winogradskyi (strain ATCC 25391 / DSM 10237 / CIP 104748 / NCIMB 11846 / Nb-255)</name>
    <dbReference type="NCBI Taxonomy" id="323098"/>
    <lineage>
        <taxon>Bacteria</taxon>
        <taxon>Pseudomonadati</taxon>
        <taxon>Pseudomonadota</taxon>
        <taxon>Alphaproteobacteria</taxon>
        <taxon>Hyphomicrobiales</taxon>
        <taxon>Nitrobacteraceae</taxon>
        <taxon>Nitrobacter</taxon>
    </lineage>
</organism>
<comment type="function">
    <text evidence="1">This protein is one of the two subunits of integration host factor, a specific DNA-binding protein that functions in genetic recombination as well as in transcriptional and translational control.</text>
</comment>
<comment type="subunit">
    <text evidence="1">Heterodimer of an alpha and a beta chain.</text>
</comment>
<comment type="similarity">
    <text evidence="1">Belongs to the bacterial histone-like protein family.</text>
</comment>
<reference key="1">
    <citation type="journal article" date="2006" name="Appl. Environ. Microbiol.">
        <title>Genome sequence of the chemolithoautotrophic nitrite-oxidizing bacterium Nitrobacter winogradskyi Nb-255.</title>
        <authorList>
            <person name="Starkenburg S.R."/>
            <person name="Chain P.S.G."/>
            <person name="Sayavedra-Soto L.A."/>
            <person name="Hauser L."/>
            <person name="Land M.L."/>
            <person name="Larimer F.W."/>
            <person name="Malfatti S.A."/>
            <person name="Klotz M.G."/>
            <person name="Bottomley P.J."/>
            <person name="Arp D.J."/>
            <person name="Hickey W.J."/>
        </authorList>
    </citation>
    <scope>NUCLEOTIDE SEQUENCE [LARGE SCALE GENOMIC DNA]</scope>
    <source>
        <strain>ATCC 25391 / DSM 10237 / CIP 104748 / NCIMB 11846 / Nb-255</strain>
    </source>
</reference>
<name>IHFB_NITWN</name>
<accession>Q3SWL5</accession>
<evidence type="ECO:0000255" key="1">
    <source>
        <dbReference type="HAMAP-Rule" id="MF_00381"/>
    </source>
</evidence>
<evidence type="ECO:0000256" key="2">
    <source>
        <dbReference type="SAM" id="MobiDB-lite"/>
    </source>
</evidence>
<feature type="chain" id="PRO_1000060623" description="Integration host factor subunit beta">
    <location>
        <begin position="1"/>
        <end position="101"/>
    </location>
</feature>
<feature type="region of interest" description="Disordered" evidence="2">
    <location>
        <begin position="57"/>
        <end position="76"/>
    </location>
</feature>
<dbReference type="EMBL" id="CP000115">
    <property type="protein sequence ID" value="ABA03326.1"/>
    <property type="molecule type" value="Genomic_DNA"/>
</dbReference>
<dbReference type="RefSeq" id="WP_011313397.1">
    <property type="nucleotide sequence ID" value="NC_007406.1"/>
</dbReference>
<dbReference type="SMR" id="Q3SWL5"/>
<dbReference type="STRING" id="323098.Nwi_0058"/>
<dbReference type="KEGG" id="nwi:Nwi_0058"/>
<dbReference type="eggNOG" id="COG0776">
    <property type="taxonomic scope" value="Bacteria"/>
</dbReference>
<dbReference type="HOGENOM" id="CLU_105066_2_0_5"/>
<dbReference type="OrthoDB" id="9804203at2"/>
<dbReference type="Proteomes" id="UP000002531">
    <property type="component" value="Chromosome"/>
</dbReference>
<dbReference type="GO" id="GO:0005694">
    <property type="term" value="C:chromosome"/>
    <property type="evidence" value="ECO:0007669"/>
    <property type="project" value="InterPro"/>
</dbReference>
<dbReference type="GO" id="GO:0005829">
    <property type="term" value="C:cytosol"/>
    <property type="evidence" value="ECO:0007669"/>
    <property type="project" value="TreeGrafter"/>
</dbReference>
<dbReference type="GO" id="GO:0003677">
    <property type="term" value="F:DNA binding"/>
    <property type="evidence" value="ECO:0007669"/>
    <property type="project" value="UniProtKB-UniRule"/>
</dbReference>
<dbReference type="GO" id="GO:0030527">
    <property type="term" value="F:structural constituent of chromatin"/>
    <property type="evidence" value="ECO:0007669"/>
    <property type="project" value="InterPro"/>
</dbReference>
<dbReference type="GO" id="GO:0006310">
    <property type="term" value="P:DNA recombination"/>
    <property type="evidence" value="ECO:0007669"/>
    <property type="project" value="UniProtKB-UniRule"/>
</dbReference>
<dbReference type="GO" id="GO:0006355">
    <property type="term" value="P:regulation of DNA-templated transcription"/>
    <property type="evidence" value="ECO:0007669"/>
    <property type="project" value="UniProtKB-UniRule"/>
</dbReference>
<dbReference type="GO" id="GO:0006417">
    <property type="term" value="P:regulation of translation"/>
    <property type="evidence" value="ECO:0007669"/>
    <property type="project" value="UniProtKB-UniRule"/>
</dbReference>
<dbReference type="CDD" id="cd13836">
    <property type="entry name" value="IHF_B"/>
    <property type="match status" value="1"/>
</dbReference>
<dbReference type="FunFam" id="4.10.520.10:FF:000008">
    <property type="entry name" value="Integration host factor subunit beta"/>
    <property type="match status" value="1"/>
</dbReference>
<dbReference type="Gene3D" id="4.10.520.10">
    <property type="entry name" value="IHF-like DNA-binding proteins"/>
    <property type="match status" value="1"/>
</dbReference>
<dbReference type="HAMAP" id="MF_00381">
    <property type="entry name" value="IHF_beta"/>
    <property type="match status" value="1"/>
</dbReference>
<dbReference type="InterPro" id="IPR000119">
    <property type="entry name" value="Hist_DNA-bd"/>
</dbReference>
<dbReference type="InterPro" id="IPR020816">
    <property type="entry name" value="Histone-like_DNA-bd_CS"/>
</dbReference>
<dbReference type="InterPro" id="IPR010992">
    <property type="entry name" value="IHF-like_DNA-bd_dom_sf"/>
</dbReference>
<dbReference type="InterPro" id="IPR005685">
    <property type="entry name" value="IHF_beta"/>
</dbReference>
<dbReference type="NCBIfam" id="TIGR00988">
    <property type="entry name" value="hip"/>
    <property type="match status" value="1"/>
</dbReference>
<dbReference type="NCBIfam" id="NF001222">
    <property type="entry name" value="PRK00199.1"/>
    <property type="match status" value="1"/>
</dbReference>
<dbReference type="PANTHER" id="PTHR33175">
    <property type="entry name" value="DNA-BINDING PROTEIN HU"/>
    <property type="match status" value="1"/>
</dbReference>
<dbReference type="PANTHER" id="PTHR33175:SF5">
    <property type="entry name" value="INTEGRATION HOST FACTOR SUBUNIT BETA"/>
    <property type="match status" value="1"/>
</dbReference>
<dbReference type="Pfam" id="PF00216">
    <property type="entry name" value="Bac_DNA_binding"/>
    <property type="match status" value="1"/>
</dbReference>
<dbReference type="PRINTS" id="PR01727">
    <property type="entry name" value="DNABINDINGHU"/>
</dbReference>
<dbReference type="SMART" id="SM00411">
    <property type="entry name" value="BHL"/>
    <property type="match status" value="1"/>
</dbReference>
<dbReference type="SUPFAM" id="SSF47729">
    <property type="entry name" value="IHF-like DNA-binding proteins"/>
    <property type="match status" value="1"/>
</dbReference>
<dbReference type="PROSITE" id="PS00045">
    <property type="entry name" value="HISTONE_LIKE"/>
    <property type="match status" value="1"/>
</dbReference>